<comment type="function">
    <text evidence="1">Part of the ABC transporter complex HmuTUV involved in hemin import. Responsible for energy coupling to the transport system.</text>
</comment>
<comment type="subunit">
    <text evidence="1">The complex is composed of two ATP-binding proteins (HmuV), two transmembrane proteins (HmuU) and a solute-binding protein (HmuT).</text>
</comment>
<comment type="subcellular location">
    <subcellularLocation>
        <location evidence="1">Cell inner membrane</location>
        <topology evidence="1">Peripheral membrane protein</topology>
    </subcellularLocation>
</comment>
<comment type="similarity">
    <text evidence="1">Belongs to the ABC transporter superfamily. Heme (hemin) importer (TC 3.A.1.14.5) family.</text>
</comment>
<feature type="chain" id="PRO_0000269601" description="Hemin import ATP-binding protein HmuV">
    <location>
        <begin position="1"/>
        <end position="269"/>
    </location>
</feature>
<feature type="domain" description="ABC transporter" evidence="1">
    <location>
        <begin position="2"/>
        <end position="242"/>
    </location>
</feature>
<feature type="binding site" evidence="1">
    <location>
        <begin position="34"/>
        <end position="41"/>
    </location>
    <ligand>
        <name>ATP</name>
        <dbReference type="ChEBI" id="CHEBI:30616"/>
    </ligand>
</feature>
<gene>
    <name evidence="1" type="primary">hmuV</name>
    <name type="ordered locus">Mfla_1607</name>
</gene>
<name>HMUV_METFK</name>
<organism>
    <name type="scientific">Methylobacillus flagellatus (strain ATCC 51484 / DSM 6875 / VKM B-1610 / KT)</name>
    <dbReference type="NCBI Taxonomy" id="265072"/>
    <lineage>
        <taxon>Bacteria</taxon>
        <taxon>Pseudomonadati</taxon>
        <taxon>Pseudomonadota</taxon>
        <taxon>Betaproteobacteria</taxon>
        <taxon>Nitrosomonadales</taxon>
        <taxon>Methylophilaceae</taxon>
        <taxon>Methylobacillus</taxon>
    </lineage>
</organism>
<dbReference type="EC" id="7.6.2.-" evidence="1"/>
<dbReference type="EMBL" id="CP000284">
    <property type="protein sequence ID" value="ABE49875.1"/>
    <property type="molecule type" value="Genomic_DNA"/>
</dbReference>
<dbReference type="RefSeq" id="WP_011479829.1">
    <property type="nucleotide sequence ID" value="NC_007947.1"/>
</dbReference>
<dbReference type="SMR" id="Q1H0W2"/>
<dbReference type="STRING" id="265072.Mfla_1607"/>
<dbReference type="KEGG" id="mfa:Mfla_1607"/>
<dbReference type="eggNOG" id="COG4559">
    <property type="taxonomic scope" value="Bacteria"/>
</dbReference>
<dbReference type="HOGENOM" id="CLU_000604_1_11_4"/>
<dbReference type="OrthoDB" id="9802264at2"/>
<dbReference type="Proteomes" id="UP000002440">
    <property type="component" value="Chromosome"/>
</dbReference>
<dbReference type="GO" id="GO:0005886">
    <property type="term" value="C:plasma membrane"/>
    <property type="evidence" value="ECO:0007669"/>
    <property type="project" value="UniProtKB-SubCell"/>
</dbReference>
<dbReference type="GO" id="GO:0005524">
    <property type="term" value="F:ATP binding"/>
    <property type="evidence" value="ECO:0007669"/>
    <property type="project" value="UniProtKB-KW"/>
</dbReference>
<dbReference type="GO" id="GO:0016887">
    <property type="term" value="F:ATP hydrolysis activity"/>
    <property type="evidence" value="ECO:0007669"/>
    <property type="project" value="InterPro"/>
</dbReference>
<dbReference type="CDD" id="cd03214">
    <property type="entry name" value="ABC_Iron-Siderophores_B12_Hemin"/>
    <property type="match status" value="1"/>
</dbReference>
<dbReference type="Gene3D" id="3.40.50.300">
    <property type="entry name" value="P-loop containing nucleotide triphosphate hydrolases"/>
    <property type="match status" value="1"/>
</dbReference>
<dbReference type="InterPro" id="IPR003593">
    <property type="entry name" value="AAA+_ATPase"/>
</dbReference>
<dbReference type="InterPro" id="IPR003439">
    <property type="entry name" value="ABC_transporter-like_ATP-bd"/>
</dbReference>
<dbReference type="InterPro" id="IPR017871">
    <property type="entry name" value="ABC_transporter-like_CS"/>
</dbReference>
<dbReference type="InterPro" id="IPR027417">
    <property type="entry name" value="P-loop_NTPase"/>
</dbReference>
<dbReference type="NCBIfam" id="NF010068">
    <property type="entry name" value="PRK13548.1"/>
    <property type="match status" value="1"/>
</dbReference>
<dbReference type="PANTHER" id="PTHR42794">
    <property type="entry name" value="HEMIN IMPORT ATP-BINDING PROTEIN HMUV"/>
    <property type="match status" value="1"/>
</dbReference>
<dbReference type="PANTHER" id="PTHR42794:SF1">
    <property type="entry name" value="HEMIN IMPORT ATP-BINDING PROTEIN HMUV"/>
    <property type="match status" value="1"/>
</dbReference>
<dbReference type="Pfam" id="PF00005">
    <property type="entry name" value="ABC_tran"/>
    <property type="match status" value="1"/>
</dbReference>
<dbReference type="SMART" id="SM00382">
    <property type="entry name" value="AAA"/>
    <property type="match status" value="1"/>
</dbReference>
<dbReference type="SUPFAM" id="SSF52540">
    <property type="entry name" value="P-loop containing nucleoside triphosphate hydrolases"/>
    <property type="match status" value="1"/>
</dbReference>
<dbReference type="PROSITE" id="PS00211">
    <property type="entry name" value="ABC_TRANSPORTER_1"/>
    <property type="match status" value="1"/>
</dbReference>
<dbReference type="PROSITE" id="PS50893">
    <property type="entry name" value="ABC_TRANSPORTER_2"/>
    <property type="match status" value="1"/>
</dbReference>
<dbReference type="PROSITE" id="PS51261">
    <property type="entry name" value="HMUV"/>
    <property type="match status" value="1"/>
</dbReference>
<accession>Q1H0W2</accession>
<reference key="1">
    <citation type="submission" date="2006-03" db="EMBL/GenBank/DDBJ databases">
        <title>Complete sequence of Methylobacillus flagellatus KT.</title>
        <authorList>
            <consortium name="US DOE Joint Genome Institute"/>
            <person name="Copeland A."/>
            <person name="Lucas S."/>
            <person name="Lapidus A."/>
            <person name="Barry K."/>
            <person name="Detter J.C."/>
            <person name="Glavina del Rio T."/>
            <person name="Hammon N."/>
            <person name="Israni S."/>
            <person name="Dalin E."/>
            <person name="Tice H."/>
            <person name="Pitluck S."/>
            <person name="Brettin T."/>
            <person name="Bruce D."/>
            <person name="Han C."/>
            <person name="Tapia R."/>
            <person name="Saunders E."/>
            <person name="Gilna P."/>
            <person name="Schmutz J."/>
            <person name="Larimer F."/>
            <person name="Land M."/>
            <person name="Kyrpides N."/>
            <person name="Anderson I."/>
            <person name="Richardson P."/>
        </authorList>
    </citation>
    <scope>NUCLEOTIDE SEQUENCE [LARGE SCALE GENOMIC DNA]</scope>
    <source>
        <strain>ATCC 51484 / DSM 6875 / VKM B-1610 / KT</strain>
    </source>
</reference>
<proteinExistence type="inferred from homology"/>
<protein>
    <recommendedName>
        <fullName evidence="1">Hemin import ATP-binding protein HmuV</fullName>
        <ecNumber evidence="1">7.6.2.-</ecNumber>
    </recommendedName>
</protein>
<keyword id="KW-0067">ATP-binding</keyword>
<keyword id="KW-0997">Cell inner membrane</keyword>
<keyword id="KW-1003">Cell membrane</keyword>
<keyword id="KW-0472">Membrane</keyword>
<keyword id="KW-0547">Nucleotide-binding</keyword>
<keyword id="KW-1185">Reference proteome</keyword>
<keyword id="KW-1278">Translocase</keyword>
<keyword id="KW-0813">Transport</keyword>
<evidence type="ECO:0000255" key="1">
    <source>
        <dbReference type="HAMAP-Rule" id="MF_01718"/>
    </source>
</evidence>
<sequence length="269" mass="29363">MLEVIHTGLNIGSKTLLHDISFIIKPGEMVAICGPNGAGKSSLIRLLCGELKPSSGEVRWEGKSLAEWNLLQLARQRALMQQHAEVGFAYTALEIILLGRHPHHLGANRPQDYQIAMAAMQEVGAVHLAEQIYSTLSGGEQARVQMARVLAQIWESSQGARLLLLDEPTAALDPLQQHRMLTIARKWADKGDVAVVAIVHDLNLAAQYADRIALLRDGRLQAIDRVESIMTPAMVEACFDLPCVLLNHPDGGTPMIAARRHPSSSMIAT</sequence>